<gene>
    <name evidence="1" type="primary">pheS</name>
    <name type="ordered locus">EAT1b_0641</name>
</gene>
<keyword id="KW-0030">Aminoacyl-tRNA synthetase</keyword>
<keyword id="KW-0067">ATP-binding</keyword>
<keyword id="KW-0963">Cytoplasm</keyword>
<keyword id="KW-0436">Ligase</keyword>
<keyword id="KW-0460">Magnesium</keyword>
<keyword id="KW-0479">Metal-binding</keyword>
<keyword id="KW-0547">Nucleotide-binding</keyword>
<keyword id="KW-0648">Protein biosynthesis</keyword>
<protein>
    <recommendedName>
        <fullName evidence="1">Phenylalanine--tRNA ligase alpha subunit</fullName>
        <ecNumber evidence="1">6.1.1.20</ecNumber>
    </recommendedName>
    <alternativeName>
        <fullName evidence="1">Phenylalanyl-tRNA synthetase alpha subunit</fullName>
        <shortName evidence="1">PheRS</shortName>
    </alternativeName>
</protein>
<proteinExistence type="inferred from homology"/>
<reference key="1">
    <citation type="journal article" date="2011" name="J. Bacteriol.">
        <title>Complete genome sequence of the Thermophilic Bacterium Exiguobacterium sp. AT1b.</title>
        <authorList>
            <person name="Vishnivetskaya T.A."/>
            <person name="Lucas S."/>
            <person name="Copeland A."/>
            <person name="Lapidus A."/>
            <person name="Glavina del Rio T."/>
            <person name="Dalin E."/>
            <person name="Tice H."/>
            <person name="Bruce D.C."/>
            <person name="Goodwin L.A."/>
            <person name="Pitluck S."/>
            <person name="Saunders E."/>
            <person name="Brettin T."/>
            <person name="Detter C."/>
            <person name="Han C."/>
            <person name="Larimer F."/>
            <person name="Land M.L."/>
            <person name="Hauser L.J."/>
            <person name="Kyrpides N.C."/>
            <person name="Ovchinnikova G."/>
            <person name="Kathariou S."/>
            <person name="Ramaley R.F."/>
            <person name="Rodrigues D.F."/>
            <person name="Hendrix C."/>
            <person name="Richardson P."/>
            <person name="Tiedje J.M."/>
        </authorList>
    </citation>
    <scope>NUCLEOTIDE SEQUENCE [LARGE SCALE GENOMIC DNA]</scope>
    <source>
        <strain>ATCC BAA-1283 / AT1b</strain>
    </source>
</reference>
<organism>
    <name type="scientific">Exiguobacterium sp. (strain ATCC BAA-1283 / AT1b)</name>
    <dbReference type="NCBI Taxonomy" id="360911"/>
    <lineage>
        <taxon>Bacteria</taxon>
        <taxon>Bacillati</taxon>
        <taxon>Bacillota</taxon>
        <taxon>Bacilli</taxon>
        <taxon>Bacillales</taxon>
        <taxon>Bacillales Family XII. Incertae Sedis</taxon>
        <taxon>Exiguobacterium</taxon>
    </lineage>
</organism>
<accession>C4L450</accession>
<evidence type="ECO:0000255" key="1">
    <source>
        <dbReference type="HAMAP-Rule" id="MF_00281"/>
    </source>
</evidence>
<feature type="chain" id="PRO_1000204826" description="Phenylalanine--tRNA ligase alpha subunit">
    <location>
        <begin position="1"/>
        <end position="340"/>
    </location>
</feature>
<feature type="binding site" evidence="1">
    <location>
        <position position="255"/>
    </location>
    <ligand>
        <name>Mg(2+)</name>
        <dbReference type="ChEBI" id="CHEBI:18420"/>
        <note>shared with beta subunit</note>
    </ligand>
</feature>
<comment type="catalytic activity">
    <reaction evidence="1">
        <text>tRNA(Phe) + L-phenylalanine + ATP = L-phenylalanyl-tRNA(Phe) + AMP + diphosphate + H(+)</text>
        <dbReference type="Rhea" id="RHEA:19413"/>
        <dbReference type="Rhea" id="RHEA-COMP:9668"/>
        <dbReference type="Rhea" id="RHEA-COMP:9699"/>
        <dbReference type="ChEBI" id="CHEBI:15378"/>
        <dbReference type="ChEBI" id="CHEBI:30616"/>
        <dbReference type="ChEBI" id="CHEBI:33019"/>
        <dbReference type="ChEBI" id="CHEBI:58095"/>
        <dbReference type="ChEBI" id="CHEBI:78442"/>
        <dbReference type="ChEBI" id="CHEBI:78531"/>
        <dbReference type="ChEBI" id="CHEBI:456215"/>
        <dbReference type="EC" id="6.1.1.20"/>
    </reaction>
</comment>
<comment type="cofactor">
    <cofactor evidence="1">
        <name>Mg(2+)</name>
        <dbReference type="ChEBI" id="CHEBI:18420"/>
    </cofactor>
    <text evidence="1">Binds 2 magnesium ions per tetramer.</text>
</comment>
<comment type="subunit">
    <text evidence="1">Tetramer of two alpha and two beta subunits.</text>
</comment>
<comment type="subcellular location">
    <subcellularLocation>
        <location evidence="1">Cytoplasm</location>
    </subcellularLocation>
</comment>
<comment type="similarity">
    <text evidence="1">Belongs to the class-II aminoacyl-tRNA synthetase family. Phe-tRNA synthetase alpha subunit type 1 subfamily.</text>
</comment>
<dbReference type="EC" id="6.1.1.20" evidence="1"/>
<dbReference type="EMBL" id="CP001615">
    <property type="protein sequence ID" value="ACQ69572.1"/>
    <property type="molecule type" value="Genomic_DNA"/>
</dbReference>
<dbReference type="RefSeq" id="WP_012726691.1">
    <property type="nucleotide sequence ID" value="NC_012673.1"/>
</dbReference>
<dbReference type="SMR" id="C4L450"/>
<dbReference type="STRING" id="360911.EAT1b_0641"/>
<dbReference type="KEGG" id="eat:EAT1b_0641"/>
<dbReference type="eggNOG" id="COG0016">
    <property type="taxonomic scope" value="Bacteria"/>
</dbReference>
<dbReference type="HOGENOM" id="CLU_025086_0_1_9"/>
<dbReference type="OrthoDB" id="9800719at2"/>
<dbReference type="Proteomes" id="UP000000716">
    <property type="component" value="Chromosome"/>
</dbReference>
<dbReference type="GO" id="GO:0005737">
    <property type="term" value="C:cytoplasm"/>
    <property type="evidence" value="ECO:0007669"/>
    <property type="project" value="UniProtKB-SubCell"/>
</dbReference>
<dbReference type="GO" id="GO:0005524">
    <property type="term" value="F:ATP binding"/>
    <property type="evidence" value="ECO:0007669"/>
    <property type="project" value="UniProtKB-UniRule"/>
</dbReference>
<dbReference type="GO" id="GO:0140096">
    <property type="term" value="F:catalytic activity, acting on a protein"/>
    <property type="evidence" value="ECO:0007669"/>
    <property type="project" value="UniProtKB-ARBA"/>
</dbReference>
<dbReference type="GO" id="GO:0000287">
    <property type="term" value="F:magnesium ion binding"/>
    <property type="evidence" value="ECO:0007669"/>
    <property type="project" value="UniProtKB-UniRule"/>
</dbReference>
<dbReference type="GO" id="GO:0004826">
    <property type="term" value="F:phenylalanine-tRNA ligase activity"/>
    <property type="evidence" value="ECO:0007669"/>
    <property type="project" value="UniProtKB-UniRule"/>
</dbReference>
<dbReference type="GO" id="GO:0016740">
    <property type="term" value="F:transferase activity"/>
    <property type="evidence" value="ECO:0007669"/>
    <property type="project" value="UniProtKB-ARBA"/>
</dbReference>
<dbReference type="GO" id="GO:0000049">
    <property type="term" value="F:tRNA binding"/>
    <property type="evidence" value="ECO:0007669"/>
    <property type="project" value="InterPro"/>
</dbReference>
<dbReference type="GO" id="GO:0006432">
    <property type="term" value="P:phenylalanyl-tRNA aminoacylation"/>
    <property type="evidence" value="ECO:0007669"/>
    <property type="project" value="UniProtKB-UniRule"/>
</dbReference>
<dbReference type="CDD" id="cd00496">
    <property type="entry name" value="PheRS_alpha_core"/>
    <property type="match status" value="1"/>
</dbReference>
<dbReference type="FunFam" id="3.30.930.10:FF:000003">
    <property type="entry name" value="Phenylalanine--tRNA ligase alpha subunit"/>
    <property type="match status" value="1"/>
</dbReference>
<dbReference type="Gene3D" id="3.30.930.10">
    <property type="entry name" value="Bira Bifunctional Protein, Domain 2"/>
    <property type="match status" value="1"/>
</dbReference>
<dbReference type="HAMAP" id="MF_00281">
    <property type="entry name" value="Phe_tRNA_synth_alpha1"/>
    <property type="match status" value="1"/>
</dbReference>
<dbReference type="InterPro" id="IPR006195">
    <property type="entry name" value="aa-tRNA-synth_II"/>
</dbReference>
<dbReference type="InterPro" id="IPR045864">
    <property type="entry name" value="aa-tRNA-synth_II/BPL/LPL"/>
</dbReference>
<dbReference type="InterPro" id="IPR004529">
    <property type="entry name" value="Phe-tRNA-synth_IIc_asu"/>
</dbReference>
<dbReference type="InterPro" id="IPR004188">
    <property type="entry name" value="Phe-tRNA_ligase_II_N"/>
</dbReference>
<dbReference type="InterPro" id="IPR022911">
    <property type="entry name" value="Phe_tRNA_ligase_alpha1_bac"/>
</dbReference>
<dbReference type="InterPro" id="IPR002319">
    <property type="entry name" value="Phenylalanyl-tRNA_Synthase"/>
</dbReference>
<dbReference type="InterPro" id="IPR010978">
    <property type="entry name" value="tRNA-bd_arm"/>
</dbReference>
<dbReference type="NCBIfam" id="TIGR00468">
    <property type="entry name" value="pheS"/>
    <property type="match status" value="1"/>
</dbReference>
<dbReference type="PANTHER" id="PTHR11538:SF41">
    <property type="entry name" value="PHENYLALANINE--TRNA LIGASE, MITOCHONDRIAL"/>
    <property type="match status" value="1"/>
</dbReference>
<dbReference type="PANTHER" id="PTHR11538">
    <property type="entry name" value="PHENYLALANYL-TRNA SYNTHETASE"/>
    <property type="match status" value="1"/>
</dbReference>
<dbReference type="Pfam" id="PF02912">
    <property type="entry name" value="Phe_tRNA-synt_N"/>
    <property type="match status" value="1"/>
</dbReference>
<dbReference type="Pfam" id="PF01409">
    <property type="entry name" value="tRNA-synt_2d"/>
    <property type="match status" value="1"/>
</dbReference>
<dbReference type="SUPFAM" id="SSF55681">
    <property type="entry name" value="Class II aaRS and biotin synthetases"/>
    <property type="match status" value="1"/>
</dbReference>
<dbReference type="SUPFAM" id="SSF46589">
    <property type="entry name" value="tRNA-binding arm"/>
    <property type="match status" value="1"/>
</dbReference>
<dbReference type="PROSITE" id="PS50862">
    <property type="entry name" value="AA_TRNA_LIGASE_II"/>
    <property type="match status" value="1"/>
</dbReference>
<sequence>MKEQLEQLQVEALEEIKQASTQKSLNDVRIKYLGKKGPMTEVLRGMGKLSAEERPIIGELANTVRTAIQSTLDARIEEVKAIELEEKLKAETLDVTLPGRTSTPGHSHLLQQIIDEMEDLFVGLGYTIAEGPEVETDLYNFEMLNLPKDHPARDMQDSFYITEETLLRTHTSPVQARTMLEANGKPIRIICPGKVYRRDEDDATHSHQFMQIEGLVVDESISMADLKGTLEVFVKQLFGETREIRLRPSFFPFTEPSVEVDISCFKCGGKGCNVCKGTGWIEILGGGMVHPHVLEMAGYDSSKVSGFAFGIGVERMAMLKHGVDDIRHFYTNDLRFIEQF</sequence>
<name>SYFA_EXISA</name>